<reference key="1">
    <citation type="journal article" date="2002" name="Mol. Microbiol.">
        <title>Genome sequence of Streptococcus agalactiae, a pathogen causing invasive neonatal disease.</title>
        <authorList>
            <person name="Glaser P."/>
            <person name="Rusniok C."/>
            <person name="Buchrieser C."/>
            <person name="Chevalier F."/>
            <person name="Frangeul L."/>
            <person name="Msadek T."/>
            <person name="Zouine M."/>
            <person name="Couve E."/>
            <person name="Lalioui L."/>
            <person name="Poyart C."/>
            <person name="Trieu-Cuot P."/>
            <person name="Kunst F."/>
        </authorList>
    </citation>
    <scope>NUCLEOTIDE SEQUENCE [LARGE SCALE GENOMIC DNA]</scope>
    <source>
        <strain>NEM316</strain>
    </source>
</reference>
<comment type="catalytic activity">
    <reaction evidence="1">
        <text>tRNA(Cys) + L-cysteine + ATP = L-cysteinyl-tRNA(Cys) + AMP + diphosphate</text>
        <dbReference type="Rhea" id="RHEA:17773"/>
        <dbReference type="Rhea" id="RHEA-COMP:9661"/>
        <dbReference type="Rhea" id="RHEA-COMP:9679"/>
        <dbReference type="ChEBI" id="CHEBI:30616"/>
        <dbReference type="ChEBI" id="CHEBI:33019"/>
        <dbReference type="ChEBI" id="CHEBI:35235"/>
        <dbReference type="ChEBI" id="CHEBI:78442"/>
        <dbReference type="ChEBI" id="CHEBI:78517"/>
        <dbReference type="ChEBI" id="CHEBI:456215"/>
        <dbReference type="EC" id="6.1.1.16"/>
    </reaction>
</comment>
<comment type="cofactor">
    <cofactor evidence="1">
        <name>Zn(2+)</name>
        <dbReference type="ChEBI" id="CHEBI:29105"/>
    </cofactor>
    <text evidence="1">Binds 1 zinc ion per subunit.</text>
</comment>
<comment type="subunit">
    <text evidence="1">Monomer.</text>
</comment>
<comment type="subcellular location">
    <subcellularLocation>
        <location evidence="1">Cytoplasm</location>
    </subcellularLocation>
</comment>
<comment type="similarity">
    <text evidence="1">Belongs to the class-I aminoacyl-tRNA synthetase family.</text>
</comment>
<feature type="chain" id="PRO_0000159486" description="Cysteine--tRNA ligase">
    <location>
        <begin position="1"/>
        <end position="447"/>
    </location>
</feature>
<feature type="short sequence motif" description="'HIGH' region">
    <location>
        <begin position="30"/>
        <end position="40"/>
    </location>
</feature>
<feature type="short sequence motif" description="'KMSKS' region">
    <location>
        <begin position="268"/>
        <end position="272"/>
    </location>
</feature>
<feature type="binding site" evidence="1">
    <location>
        <position position="28"/>
    </location>
    <ligand>
        <name>Zn(2+)</name>
        <dbReference type="ChEBI" id="CHEBI:29105"/>
    </ligand>
</feature>
<feature type="binding site" evidence="1">
    <location>
        <position position="211"/>
    </location>
    <ligand>
        <name>Zn(2+)</name>
        <dbReference type="ChEBI" id="CHEBI:29105"/>
    </ligand>
</feature>
<feature type="binding site" evidence="1">
    <location>
        <position position="236"/>
    </location>
    <ligand>
        <name>Zn(2+)</name>
        <dbReference type="ChEBI" id="CHEBI:29105"/>
    </ligand>
</feature>
<feature type="binding site" evidence="1">
    <location>
        <position position="240"/>
    </location>
    <ligand>
        <name>Zn(2+)</name>
        <dbReference type="ChEBI" id="CHEBI:29105"/>
    </ligand>
</feature>
<feature type="binding site" evidence="1">
    <location>
        <position position="271"/>
    </location>
    <ligand>
        <name>ATP</name>
        <dbReference type="ChEBI" id="CHEBI:30616"/>
    </ligand>
</feature>
<evidence type="ECO:0000255" key="1">
    <source>
        <dbReference type="HAMAP-Rule" id="MF_00041"/>
    </source>
</evidence>
<sequence>MIKIYDTMTRSLQDFIPLNEGKVNMYVCGPTVYNYIHIGNARSVVAFDTIRRYFEYCGYQVNYISNFTDVDDKIIKGAAEAGMDTKSFSDKFISAFMEDVAALGVKPATKNPRVIDYMDEIIDFVKVLVDKEFAYEANGDVYFRVSKSHHYAKLANKTLEDLEIGASGRVDGEGEIKENPLDFALWKSAKSGEVSWESPWGKGRPGWHIECSVMATEILGDTIDIHGGGADLEFPHHTNEIAQSEAKTGKTFANYWMHNGFVNVDNEKMSKSLGNFITVHDMLKSVDGQVIRFFLATQQYRKPVNFTEKAVHDAEVNLKYLKNTFNLPIQENANDEELEQFVKAFQEAMDDDFNTANGITVIFEMAKWINSGHYTSKVKETLAELLEIFGIVFQEEVLDADIESLIEQRQEARANRDFATADRIRDELAKQGIKLLDTKDGVRWTRD</sequence>
<gene>
    <name evidence="1" type="primary">cysS</name>
    <name type="ordered locus">gbs0202</name>
</gene>
<proteinExistence type="inferred from homology"/>
<keyword id="KW-0030">Aminoacyl-tRNA synthetase</keyword>
<keyword id="KW-0067">ATP-binding</keyword>
<keyword id="KW-0963">Cytoplasm</keyword>
<keyword id="KW-0436">Ligase</keyword>
<keyword id="KW-0479">Metal-binding</keyword>
<keyword id="KW-0547">Nucleotide-binding</keyword>
<keyword id="KW-0648">Protein biosynthesis</keyword>
<keyword id="KW-0862">Zinc</keyword>
<name>SYC_STRA3</name>
<dbReference type="EC" id="6.1.1.16" evidence="1"/>
<dbReference type="EMBL" id="AL766844">
    <property type="protein sequence ID" value="CAD45847.1"/>
    <property type="molecule type" value="Genomic_DNA"/>
</dbReference>
<dbReference type="RefSeq" id="WP_000591129.1">
    <property type="nucleotide sequence ID" value="NC_004368.1"/>
</dbReference>
<dbReference type="SMR" id="Q8E7F2"/>
<dbReference type="KEGG" id="san:cysS"/>
<dbReference type="eggNOG" id="COG0215">
    <property type="taxonomic scope" value="Bacteria"/>
</dbReference>
<dbReference type="HOGENOM" id="CLU_013528_0_1_9"/>
<dbReference type="Proteomes" id="UP000000823">
    <property type="component" value="Chromosome"/>
</dbReference>
<dbReference type="GO" id="GO:0005829">
    <property type="term" value="C:cytosol"/>
    <property type="evidence" value="ECO:0007669"/>
    <property type="project" value="TreeGrafter"/>
</dbReference>
<dbReference type="GO" id="GO:0005524">
    <property type="term" value="F:ATP binding"/>
    <property type="evidence" value="ECO:0007669"/>
    <property type="project" value="UniProtKB-UniRule"/>
</dbReference>
<dbReference type="GO" id="GO:0004817">
    <property type="term" value="F:cysteine-tRNA ligase activity"/>
    <property type="evidence" value="ECO:0007669"/>
    <property type="project" value="UniProtKB-UniRule"/>
</dbReference>
<dbReference type="GO" id="GO:0008270">
    <property type="term" value="F:zinc ion binding"/>
    <property type="evidence" value="ECO:0007669"/>
    <property type="project" value="UniProtKB-UniRule"/>
</dbReference>
<dbReference type="GO" id="GO:0006423">
    <property type="term" value="P:cysteinyl-tRNA aminoacylation"/>
    <property type="evidence" value="ECO:0007669"/>
    <property type="project" value="UniProtKB-UniRule"/>
</dbReference>
<dbReference type="CDD" id="cd00672">
    <property type="entry name" value="CysRS_core"/>
    <property type="match status" value="1"/>
</dbReference>
<dbReference type="FunFam" id="3.40.50.620:FF:000130">
    <property type="entry name" value="Cysteine--tRNA ligase"/>
    <property type="match status" value="1"/>
</dbReference>
<dbReference type="Gene3D" id="1.20.120.640">
    <property type="entry name" value="Anticodon-binding domain of a subclass of class I aminoacyl-tRNA synthetases"/>
    <property type="match status" value="1"/>
</dbReference>
<dbReference type="Gene3D" id="3.40.50.620">
    <property type="entry name" value="HUPs"/>
    <property type="match status" value="1"/>
</dbReference>
<dbReference type="HAMAP" id="MF_00041">
    <property type="entry name" value="Cys_tRNA_synth"/>
    <property type="match status" value="1"/>
</dbReference>
<dbReference type="InterPro" id="IPR015803">
    <property type="entry name" value="Cys-tRNA-ligase"/>
</dbReference>
<dbReference type="InterPro" id="IPR015273">
    <property type="entry name" value="Cys-tRNA-synt_Ia_DALR"/>
</dbReference>
<dbReference type="InterPro" id="IPR024909">
    <property type="entry name" value="Cys-tRNA/MSH_ligase"/>
</dbReference>
<dbReference type="InterPro" id="IPR056411">
    <property type="entry name" value="CysS_C"/>
</dbReference>
<dbReference type="InterPro" id="IPR014729">
    <property type="entry name" value="Rossmann-like_a/b/a_fold"/>
</dbReference>
<dbReference type="InterPro" id="IPR032678">
    <property type="entry name" value="tRNA-synt_1_cat_dom"/>
</dbReference>
<dbReference type="InterPro" id="IPR009080">
    <property type="entry name" value="tRNAsynth_Ia_anticodon-bd"/>
</dbReference>
<dbReference type="NCBIfam" id="TIGR00435">
    <property type="entry name" value="cysS"/>
    <property type="match status" value="1"/>
</dbReference>
<dbReference type="PANTHER" id="PTHR10890:SF3">
    <property type="entry name" value="CYSTEINE--TRNA LIGASE, CYTOPLASMIC"/>
    <property type="match status" value="1"/>
</dbReference>
<dbReference type="PANTHER" id="PTHR10890">
    <property type="entry name" value="CYSTEINYL-TRNA SYNTHETASE"/>
    <property type="match status" value="1"/>
</dbReference>
<dbReference type="Pfam" id="PF23493">
    <property type="entry name" value="CysS_C"/>
    <property type="match status" value="1"/>
</dbReference>
<dbReference type="Pfam" id="PF09190">
    <property type="entry name" value="DALR_2"/>
    <property type="match status" value="1"/>
</dbReference>
<dbReference type="Pfam" id="PF01406">
    <property type="entry name" value="tRNA-synt_1e"/>
    <property type="match status" value="1"/>
</dbReference>
<dbReference type="PRINTS" id="PR00983">
    <property type="entry name" value="TRNASYNTHCYS"/>
</dbReference>
<dbReference type="SMART" id="SM00840">
    <property type="entry name" value="DALR_2"/>
    <property type="match status" value="1"/>
</dbReference>
<dbReference type="SUPFAM" id="SSF47323">
    <property type="entry name" value="Anticodon-binding domain of a subclass of class I aminoacyl-tRNA synthetases"/>
    <property type="match status" value="1"/>
</dbReference>
<dbReference type="SUPFAM" id="SSF52374">
    <property type="entry name" value="Nucleotidylyl transferase"/>
    <property type="match status" value="1"/>
</dbReference>
<protein>
    <recommendedName>
        <fullName evidence="1">Cysteine--tRNA ligase</fullName>
        <ecNumber evidence="1">6.1.1.16</ecNumber>
    </recommendedName>
    <alternativeName>
        <fullName evidence="1">Cysteinyl-tRNA synthetase</fullName>
        <shortName evidence="1">CysRS</shortName>
    </alternativeName>
</protein>
<accession>Q8E7F2</accession>
<organism>
    <name type="scientific">Streptococcus agalactiae serotype III (strain NEM316)</name>
    <dbReference type="NCBI Taxonomy" id="211110"/>
    <lineage>
        <taxon>Bacteria</taxon>
        <taxon>Bacillati</taxon>
        <taxon>Bacillota</taxon>
        <taxon>Bacilli</taxon>
        <taxon>Lactobacillales</taxon>
        <taxon>Streptococcaceae</taxon>
        <taxon>Streptococcus</taxon>
    </lineage>
</organism>